<name>SYI_SALTI</name>
<protein>
    <recommendedName>
        <fullName evidence="1">Isoleucine--tRNA ligase</fullName>
        <ecNumber evidence="1">6.1.1.5</ecNumber>
    </recommendedName>
    <alternativeName>
        <fullName evidence="1">Isoleucyl-tRNA synthetase</fullName>
        <shortName evidence="1">IleRS</shortName>
    </alternativeName>
</protein>
<feature type="chain" id="PRO_0000098457" description="Isoleucine--tRNA ligase">
    <location>
        <begin position="1"/>
        <end position="944"/>
    </location>
</feature>
<feature type="short sequence motif" description="'HIGH' region">
    <location>
        <begin position="58"/>
        <end position="68"/>
    </location>
</feature>
<feature type="short sequence motif" description="'KMSKS' region">
    <location>
        <begin position="604"/>
        <end position="608"/>
    </location>
</feature>
<feature type="binding site" evidence="1">
    <location>
        <position position="563"/>
    </location>
    <ligand>
        <name>L-isoleucyl-5'-AMP</name>
        <dbReference type="ChEBI" id="CHEBI:178002"/>
    </ligand>
</feature>
<feature type="binding site" evidence="1">
    <location>
        <position position="607"/>
    </location>
    <ligand>
        <name>ATP</name>
        <dbReference type="ChEBI" id="CHEBI:30616"/>
    </ligand>
</feature>
<feature type="binding site" evidence="1">
    <location>
        <position position="907"/>
    </location>
    <ligand>
        <name>Zn(2+)</name>
        <dbReference type="ChEBI" id="CHEBI:29105"/>
    </ligand>
</feature>
<feature type="binding site" evidence="1">
    <location>
        <position position="910"/>
    </location>
    <ligand>
        <name>Zn(2+)</name>
        <dbReference type="ChEBI" id="CHEBI:29105"/>
    </ligand>
</feature>
<feature type="binding site" evidence="1">
    <location>
        <position position="927"/>
    </location>
    <ligand>
        <name>Zn(2+)</name>
        <dbReference type="ChEBI" id="CHEBI:29105"/>
    </ligand>
</feature>
<feature type="binding site" evidence="1">
    <location>
        <position position="930"/>
    </location>
    <ligand>
        <name>Zn(2+)</name>
        <dbReference type="ChEBI" id="CHEBI:29105"/>
    </ligand>
</feature>
<organism>
    <name type="scientific">Salmonella typhi</name>
    <dbReference type="NCBI Taxonomy" id="90370"/>
    <lineage>
        <taxon>Bacteria</taxon>
        <taxon>Pseudomonadati</taxon>
        <taxon>Pseudomonadota</taxon>
        <taxon>Gammaproteobacteria</taxon>
        <taxon>Enterobacterales</taxon>
        <taxon>Enterobacteriaceae</taxon>
        <taxon>Salmonella</taxon>
    </lineage>
</organism>
<gene>
    <name evidence="1" type="primary">ileS</name>
    <name type="ordered locus">STY0055</name>
    <name type="ordered locus">t0048</name>
</gene>
<keyword id="KW-0030">Aminoacyl-tRNA synthetase</keyword>
<keyword id="KW-0067">ATP-binding</keyword>
<keyword id="KW-0963">Cytoplasm</keyword>
<keyword id="KW-0436">Ligase</keyword>
<keyword id="KW-0479">Metal-binding</keyword>
<keyword id="KW-0547">Nucleotide-binding</keyword>
<keyword id="KW-0648">Protein biosynthesis</keyword>
<keyword id="KW-0862">Zinc</keyword>
<sequence>MSDYKSTLNLPETGFPMRGDLAKREPGMLARWTDDDLYGIIRAAKKGKKTFILHDGPPYANGSIHIGHSVNKILKDIIVKSKGLSGFDSPYVPGWDCHGLPIELKVEQEFGKPGEKFTAAEFRAKCREYAATQVDGQRKDFIRLGVLGDWSHPYLTMDFKTEANIIRALGRIIKNGHLHKGAKPVHWCVDCRSALAEAEVEYYDKTSPSIDVAFRAVDQDAVKAKFGLPGVSGPVSLVIWTTTPWTLPANRAISLAPDFDYALVQIDGQAVILAKDLVESVIQRIGAAEYTILGTVKGAELELLRFTHPFMGFDVPAILGDHVTLDAGTGAVHTAPGHGPDDYVIGQKYGLETANPVGPDGAYLPGTYPTLDGVNVFKANDIVIELLKEKGALLHVEKMQHSYPCCWRHKTPIIFRATPQWFVSMDKEGLRQQSLKEIKGVQWIPDWGQARIESMVANRPDWCISRQRTWGVPMSLFVHKETQELLPIERTLAAMEEVAKRVEVDGIQAWWDLDPKEILGEDADQYEKVPDTLDVWFDSGSTSYSVVDARPEFAGHAADMYLEGSDQHRGWFMSSLMISVAMKGKAPYRQVLTHGFTVDGQGRKMSKSIGNTVSPQDVMNKLGADILRLWVASTDYTGEMAVSDEILKRAADSYRRIRNTARFLLANLNGFNPATDMVKPEEMVVLDRWAVGCAKTAQQEILKAYEAYDFHEVVQRLMRFCSVEMGSFYLDIIKDRQYTAKADSVARRSCQTALYHIAEALVRWMAPIMSFTADEIWGYLPGEREKYVFTGEWYDGLFGLEENEEFNDAFWDDVRYIKDQVNKELENQKANGIKSNLEAKVTLKYADDANGTIKKLKLLGEEVRFIFITSQFVISEQAGGIDDENIQYNAGNTTVQAVVTRAEGDKCPRCWHYTTDVGKVAEHADICGRCVSNIAGNGEQRKFA</sequence>
<evidence type="ECO:0000255" key="1">
    <source>
        <dbReference type="HAMAP-Rule" id="MF_02002"/>
    </source>
</evidence>
<accession>Q8Z9N2</accession>
<accession>Q7CBY6</accession>
<dbReference type="EC" id="6.1.1.5" evidence="1"/>
<dbReference type="EMBL" id="AL513382">
    <property type="protein sequence ID" value="CAD01201.1"/>
    <property type="molecule type" value="Genomic_DNA"/>
</dbReference>
<dbReference type="EMBL" id="AE014613">
    <property type="protein sequence ID" value="AAO67781.1"/>
    <property type="molecule type" value="Genomic_DNA"/>
</dbReference>
<dbReference type="RefSeq" id="NP_454657.1">
    <property type="nucleotide sequence ID" value="NC_003198.1"/>
</dbReference>
<dbReference type="RefSeq" id="WP_010989105.1">
    <property type="nucleotide sequence ID" value="NZ_WSUR01000014.1"/>
</dbReference>
<dbReference type="SMR" id="Q8Z9N2"/>
<dbReference type="STRING" id="220341.gene:17584103"/>
<dbReference type="KEGG" id="stt:t0048"/>
<dbReference type="KEGG" id="sty:STY0055"/>
<dbReference type="PATRIC" id="fig|220341.7.peg.55"/>
<dbReference type="eggNOG" id="COG0060">
    <property type="taxonomic scope" value="Bacteria"/>
</dbReference>
<dbReference type="HOGENOM" id="CLU_001493_7_1_6"/>
<dbReference type="OMA" id="HCWRCKT"/>
<dbReference type="OrthoDB" id="9810365at2"/>
<dbReference type="Proteomes" id="UP000000541">
    <property type="component" value="Chromosome"/>
</dbReference>
<dbReference type="Proteomes" id="UP000002670">
    <property type="component" value="Chromosome"/>
</dbReference>
<dbReference type="GO" id="GO:0005829">
    <property type="term" value="C:cytosol"/>
    <property type="evidence" value="ECO:0007669"/>
    <property type="project" value="TreeGrafter"/>
</dbReference>
<dbReference type="GO" id="GO:0002161">
    <property type="term" value="F:aminoacyl-tRNA deacylase activity"/>
    <property type="evidence" value="ECO:0007669"/>
    <property type="project" value="InterPro"/>
</dbReference>
<dbReference type="GO" id="GO:0005524">
    <property type="term" value="F:ATP binding"/>
    <property type="evidence" value="ECO:0007669"/>
    <property type="project" value="UniProtKB-UniRule"/>
</dbReference>
<dbReference type="GO" id="GO:0004822">
    <property type="term" value="F:isoleucine-tRNA ligase activity"/>
    <property type="evidence" value="ECO:0007669"/>
    <property type="project" value="UniProtKB-UniRule"/>
</dbReference>
<dbReference type="GO" id="GO:0000049">
    <property type="term" value="F:tRNA binding"/>
    <property type="evidence" value="ECO:0007669"/>
    <property type="project" value="InterPro"/>
</dbReference>
<dbReference type="GO" id="GO:0008270">
    <property type="term" value="F:zinc ion binding"/>
    <property type="evidence" value="ECO:0007669"/>
    <property type="project" value="UniProtKB-UniRule"/>
</dbReference>
<dbReference type="GO" id="GO:0006428">
    <property type="term" value="P:isoleucyl-tRNA aminoacylation"/>
    <property type="evidence" value="ECO:0007669"/>
    <property type="project" value="UniProtKB-UniRule"/>
</dbReference>
<dbReference type="CDD" id="cd07960">
    <property type="entry name" value="Anticodon_Ia_Ile_BEm"/>
    <property type="match status" value="1"/>
</dbReference>
<dbReference type="CDD" id="cd00818">
    <property type="entry name" value="IleRS_core"/>
    <property type="match status" value="1"/>
</dbReference>
<dbReference type="FunFam" id="1.10.730.20:FF:000001">
    <property type="entry name" value="Isoleucine--tRNA ligase"/>
    <property type="match status" value="1"/>
</dbReference>
<dbReference type="FunFam" id="3.40.50.620:FF:000042">
    <property type="entry name" value="Isoleucine--tRNA ligase"/>
    <property type="match status" value="1"/>
</dbReference>
<dbReference type="FunFam" id="3.40.50.620:FF:000048">
    <property type="entry name" value="Isoleucine--tRNA ligase"/>
    <property type="match status" value="1"/>
</dbReference>
<dbReference type="FunFam" id="3.90.740.10:FF:000002">
    <property type="entry name" value="Isoleucine--tRNA ligase"/>
    <property type="match status" value="1"/>
</dbReference>
<dbReference type="Gene3D" id="1.10.730.20">
    <property type="match status" value="1"/>
</dbReference>
<dbReference type="Gene3D" id="3.40.50.620">
    <property type="entry name" value="HUPs"/>
    <property type="match status" value="2"/>
</dbReference>
<dbReference type="Gene3D" id="3.90.740.10">
    <property type="entry name" value="Valyl/Leucyl/Isoleucyl-tRNA synthetase, editing domain"/>
    <property type="match status" value="1"/>
</dbReference>
<dbReference type="HAMAP" id="MF_02002">
    <property type="entry name" value="Ile_tRNA_synth_type1"/>
    <property type="match status" value="1"/>
</dbReference>
<dbReference type="InterPro" id="IPR001412">
    <property type="entry name" value="aa-tRNA-synth_I_CS"/>
</dbReference>
<dbReference type="InterPro" id="IPR002300">
    <property type="entry name" value="aa-tRNA-synth_Ia"/>
</dbReference>
<dbReference type="InterPro" id="IPR033708">
    <property type="entry name" value="Anticodon_Ile_BEm"/>
</dbReference>
<dbReference type="InterPro" id="IPR002301">
    <property type="entry name" value="Ile-tRNA-ligase"/>
</dbReference>
<dbReference type="InterPro" id="IPR023585">
    <property type="entry name" value="Ile-tRNA-ligase_type1"/>
</dbReference>
<dbReference type="InterPro" id="IPR050081">
    <property type="entry name" value="Ile-tRNA_ligase"/>
</dbReference>
<dbReference type="InterPro" id="IPR013155">
    <property type="entry name" value="M/V/L/I-tRNA-synth_anticd-bd"/>
</dbReference>
<dbReference type="InterPro" id="IPR014729">
    <property type="entry name" value="Rossmann-like_a/b/a_fold"/>
</dbReference>
<dbReference type="InterPro" id="IPR009080">
    <property type="entry name" value="tRNAsynth_Ia_anticodon-bd"/>
</dbReference>
<dbReference type="InterPro" id="IPR009008">
    <property type="entry name" value="Val/Leu/Ile-tRNA-synth_edit"/>
</dbReference>
<dbReference type="InterPro" id="IPR010663">
    <property type="entry name" value="Znf_FPG/IleRS"/>
</dbReference>
<dbReference type="NCBIfam" id="TIGR00392">
    <property type="entry name" value="ileS"/>
    <property type="match status" value="1"/>
</dbReference>
<dbReference type="PANTHER" id="PTHR42765:SF1">
    <property type="entry name" value="ISOLEUCINE--TRNA LIGASE, MITOCHONDRIAL"/>
    <property type="match status" value="1"/>
</dbReference>
<dbReference type="PANTHER" id="PTHR42765">
    <property type="entry name" value="SOLEUCYL-TRNA SYNTHETASE"/>
    <property type="match status" value="1"/>
</dbReference>
<dbReference type="Pfam" id="PF08264">
    <property type="entry name" value="Anticodon_1"/>
    <property type="match status" value="1"/>
</dbReference>
<dbReference type="Pfam" id="PF00133">
    <property type="entry name" value="tRNA-synt_1"/>
    <property type="match status" value="1"/>
</dbReference>
<dbReference type="Pfam" id="PF06827">
    <property type="entry name" value="zf-FPG_IleRS"/>
    <property type="match status" value="1"/>
</dbReference>
<dbReference type="PRINTS" id="PR00984">
    <property type="entry name" value="TRNASYNTHILE"/>
</dbReference>
<dbReference type="SUPFAM" id="SSF47323">
    <property type="entry name" value="Anticodon-binding domain of a subclass of class I aminoacyl-tRNA synthetases"/>
    <property type="match status" value="1"/>
</dbReference>
<dbReference type="SUPFAM" id="SSF52374">
    <property type="entry name" value="Nucleotidylyl transferase"/>
    <property type="match status" value="1"/>
</dbReference>
<dbReference type="SUPFAM" id="SSF50677">
    <property type="entry name" value="ValRS/IleRS/LeuRS editing domain"/>
    <property type="match status" value="1"/>
</dbReference>
<dbReference type="PROSITE" id="PS00178">
    <property type="entry name" value="AA_TRNA_LIGASE_I"/>
    <property type="match status" value="1"/>
</dbReference>
<reference key="1">
    <citation type="journal article" date="2001" name="Nature">
        <title>Complete genome sequence of a multiple drug resistant Salmonella enterica serovar Typhi CT18.</title>
        <authorList>
            <person name="Parkhill J."/>
            <person name="Dougan G."/>
            <person name="James K.D."/>
            <person name="Thomson N.R."/>
            <person name="Pickard D."/>
            <person name="Wain J."/>
            <person name="Churcher C.M."/>
            <person name="Mungall K.L."/>
            <person name="Bentley S.D."/>
            <person name="Holden M.T.G."/>
            <person name="Sebaihia M."/>
            <person name="Baker S."/>
            <person name="Basham D."/>
            <person name="Brooks K."/>
            <person name="Chillingworth T."/>
            <person name="Connerton P."/>
            <person name="Cronin A."/>
            <person name="Davis P."/>
            <person name="Davies R.M."/>
            <person name="Dowd L."/>
            <person name="White N."/>
            <person name="Farrar J."/>
            <person name="Feltwell T."/>
            <person name="Hamlin N."/>
            <person name="Haque A."/>
            <person name="Hien T.T."/>
            <person name="Holroyd S."/>
            <person name="Jagels K."/>
            <person name="Krogh A."/>
            <person name="Larsen T.S."/>
            <person name="Leather S."/>
            <person name="Moule S."/>
            <person name="O'Gaora P."/>
            <person name="Parry C."/>
            <person name="Quail M.A."/>
            <person name="Rutherford K.M."/>
            <person name="Simmonds M."/>
            <person name="Skelton J."/>
            <person name="Stevens K."/>
            <person name="Whitehead S."/>
            <person name="Barrell B.G."/>
        </authorList>
    </citation>
    <scope>NUCLEOTIDE SEQUENCE [LARGE SCALE GENOMIC DNA]</scope>
    <source>
        <strain>CT18</strain>
    </source>
</reference>
<reference key="2">
    <citation type="journal article" date="2003" name="J. Bacteriol.">
        <title>Comparative genomics of Salmonella enterica serovar Typhi strains Ty2 and CT18.</title>
        <authorList>
            <person name="Deng W."/>
            <person name="Liou S.-R."/>
            <person name="Plunkett G. III"/>
            <person name="Mayhew G.F."/>
            <person name="Rose D.J."/>
            <person name="Burland V."/>
            <person name="Kodoyianni V."/>
            <person name="Schwartz D.C."/>
            <person name="Blattner F.R."/>
        </authorList>
    </citation>
    <scope>NUCLEOTIDE SEQUENCE [LARGE SCALE GENOMIC DNA]</scope>
    <source>
        <strain>ATCC 700931 / Ty2</strain>
    </source>
</reference>
<comment type="function">
    <text evidence="1">Catalyzes the attachment of isoleucine to tRNA(Ile). As IleRS can inadvertently accommodate and process structurally similar amino acids such as valine, to avoid such errors it has two additional distinct tRNA(Ile)-dependent editing activities. One activity is designated as 'pretransfer' editing and involves the hydrolysis of activated Val-AMP. The other activity is designated 'posttransfer' editing and involves deacylation of mischarged Val-tRNA(Ile).</text>
</comment>
<comment type="catalytic activity">
    <reaction evidence="1">
        <text>tRNA(Ile) + L-isoleucine + ATP = L-isoleucyl-tRNA(Ile) + AMP + diphosphate</text>
        <dbReference type="Rhea" id="RHEA:11060"/>
        <dbReference type="Rhea" id="RHEA-COMP:9666"/>
        <dbReference type="Rhea" id="RHEA-COMP:9695"/>
        <dbReference type="ChEBI" id="CHEBI:30616"/>
        <dbReference type="ChEBI" id="CHEBI:33019"/>
        <dbReference type="ChEBI" id="CHEBI:58045"/>
        <dbReference type="ChEBI" id="CHEBI:78442"/>
        <dbReference type="ChEBI" id="CHEBI:78528"/>
        <dbReference type="ChEBI" id="CHEBI:456215"/>
        <dbReference type="EC" id="6.1.1.5"/>
    </reaction>
</comment>
<comment type="cofactor">
    <cofactor evidence="1">
        <name>Zn(2+)</name>
        <dbReference type="ChEBI" id="CHEBI:29105"/>
    </cofactor>
    <text evidence="1">Binds 1 zinc ion per subunit.</text>
</comment>
<comment type="subunit">
    <text evidence="1">Monomer.</text>
</comment>
<comment type="subcellular location">
    <subcellularLocation>
        <location evidence="1">Cytoplasm</location>
    </subcellularLocation>
</comment>
<comment type="domain">
    <text evidence="1">IleRS has two distinct active sites: one for aminoacylation and one for editing. The misactivated valine is translocated from the active site to the editing site, which sterically excludes the correctly activated isoleucine. The single editing site contains two valyl binding pockets, one specific for each substrate (Val-AMP or Val-tRNA(Ile)).</text>
</comment>
<comment type="similarity">
    <text evidence="1">Belongs to the class-I aminoacyl-tRNA synthetase family. IleS type 1 subfamily.</text>
</comment>
<proteinExistence type="inferred from homology"/>